<evidence type="ECO:0000255" key="1">
    <source>
        <dbReference type="HAMAP-Rule" id="MF_00384"/>
    </source>
</evidence>
<gene>
    <name evidence="1" type="primary">thrB</name>
    <name type="ordered locus">SYNPCC7002_A0091</name>
</gene>
<accession>B1XLE7</accession>
<organism>
    <name type="scientific">Picosynechococcus sp. (strain ATCC 27264 / PCC 7002 / PR-6)</name>
    <name type="common">Agmenellum quadruplicatum</name>
    <dbReference type="NCBI Taxonomy" id="32049"/>
    <lineage>
        <taxon>Bacteria</taxon>
        <taxon>Bacillati</taxon>
        <taxon>Cyanobacteriota</taxon>
        <taxon>Cyanophyceae</taxon>
        <taxon>Oscillatoriophycideae</taxon>
        <taxon>Chroococcales</taxon>
        <taxon>Geminocystaceae</taxon>
        <taxon>Picosynechococcus</taxon>
    </lineage>
</organism>
<comment type="function">
    <text evidence="1">Catalyzes the ATP-dependent phosphorylation of L-homoserine to L-homoserine phosphate.</text>
</comment>
<comment type="catalytic activity">
    <reaction evidence="1">
        <text>L-homoserine + ATP = O-phospho-L-homoserine + ADP + H(+)</text>
        <dbReference type="Rhea" id="RHEA:13985"/>
        <dbReference type="ChEBI" id="CHEBI:15378"/>
        <dbReference type="ChEBI" id="CHEBI:30616"/>
        <dbReference type="ChEBI" id="CHEBI:57476"/>
        <dbReference type="ChEBI" id="CHEBI:57590"/>
        <dbReference type="ChEBI" id="CHEBI:456216"/>
        <dbReference type="EC" id="2.7.1.39"/>
    </reaction>
</comment>
<comment type="pathway">
    <text evidence="1">Amino-acid biosynthesis; L-threonine biosynthesis; L-threonine from L-aspartate: step 4/5.</text>
</comment>
<comment type="subcellular location">
    <subcellularLocation>
        <location evidence="1">Cytoplasm</location>
    </subcellularLocation>
</comment>
<comment type="similarity">
    <text evidence="1">Belongs to the GHMP kinase family. Homoserine kinase subfamily.</text>
</comment>
<name>KHSE_PICP2</name>
<keyword id="KW-0028">Amino-acid biosynthesis</keyword>
<keyword id="KW-0067">ATP-binding</keyword>
<keyword id="KW-0963">Cytoplasm</keyword>
<keyword id="KW-0418">Kinase</keyword>
<keyword id="KW-0547">Nucleotide-binding</keyword>
<keyword id="KW-1185">Reference proteome</keyword>
<keyword id="KW-0791">Threonine biosynthesis</keyword>
<keyword id="KW-0808">Transferase</keyword>
<dbReference type="EC" id="2.7.1.39" evidence="1"/>
<dbReference type="EMBL" id="CP000951">
    <property type="protein sequence ID" value="ACA98107.1"/>
    <property type="molecule type" value="Genomic_DNA"/>
</dbReference>
<dbReference type="RefSeq" id="WP_012305731.1">
    <property type="nucleotide sequence ID" value="NZ_JAHHPU010000005.1"/>
</dbReference>
<dbReference type="SMR" id="B1XLE7"/>
<dbReference type="STRING" id="32049.SYNPCC7002_A0091"/>
<dbReference type="DNASU" id="6056448"/>
<dbReference type="KEGG" id="syp:SYNPCC7002_A0091"/>
<dbReference type="eggNOG" id="COG0083">
    <property type="taxonomic scope" value="Bacteria"/>
</dbReference>
<dbReference type="HOGENOM" id="CLU_041243_0_2_3"/>
<dbReference type="UniPathway" id="UPA00050">
    <property type="reaction ID" value="UER00064"/>
</dbReference>
<dbReference type="Proteomes" id="UP000001688">
    <property type="component" value="Chromosome"/>
</dbReference>
<dbReference type="GO" id="GO:0005737">
    <property type="term" value="C:cytoplasm"/>
    <property type="evidence" value="ECO:0007669"/>
    <property type="project" value="UniProtKB-SubCell"/>
</dbReference>
<dbReference type="GO" id="GO:0005524">
    <property type="term" value="F:ATP binding"/>
    <property type="evidence" value="ECO:0007669"/>
    <property type="project" value="UniProtKB-UniRule"/>
</dbReference>
<dbReference type="GO" id="GO:0004413">
    <property type="term" value="F:homoserine kinase activity"/>
    <property type="evidence" value="ECO:0007669"/>
    <property type="project" value="UniProtKB-UniRule"/>
</dbReference>
<dbReference type="GO" id="GO:0009088">
    <property type="term" value="P:threonine biosynthetic process"/>
    <property type="evidence" value="ECO:0007669"/>
    <property type="project" value="UniProtKB-UniRule"/>
</dbReference>
<dbReference type="Gene3D" id="3.30.230.10">
    <property type="match status" value="1"/>
</dbReference>
<dbReference type="Gene3D" id="3.30.70.890">
    <property type="entry name" value="GHMP kinase, C-terminal domain"/>
    <property type="match status" value="1"/>
</dbReference>
<dbReference type="HAMAP" id="MF_00384">
    <property type="entry name" value="Homoser_kinase"/>
    <property type="match status" value="1"/>
</dbReference>
<dbReference type="InterPro" id="IPR013750">
    <property type="entry name" value="GHMP_kinase_C_dom"/>
</dbReference>
<dbReference type="InterPro" id="IPR036554">
    <property type="entry name" value="GHMP_kinase_C_sf"/>
</dbReference>
<dbReference type="InterPro" id="IPR006204">
    <property type="entry name" value="GHMP_kinase_N_dom"/>
</dbReference>
<dbReference type="InterPro" id="IPR006203">
    <property type="entry name" value="GHMP_knse_ATP-bd_CS"/>
</dbReference>
<dbReference type="InterPro" id="IPR000870">
    <property type="entry name" value="Homoserine_kinase"/>
</dbReference>
<dbReference type="InterPro" id="IPR020568">
    <property type="entry name" value="Ribosomal_Su5_D2-typ_SF"/>
</dbReference>
<dbReference type="InterPro" id="IPR014721">
    <property type="entry name" value="Ribsml_uS5_D2-typ_fold_subgr"/>
</dbReference>
<dbReference type="NCBIfam" id="NF002288">
    <property type="entry name" value="PRK01212.1-4"/>
    <property type="match status" value="1"/>
</dbReference>
<dbReference type="NCBIfam" id="TIGR00191">
    <property type="entry name" value="thrB"/>
    <property type="match status" value="1"/>
</dbReference>
<dbReference type="PANTHER" id="PTHR20861:SF1">
    <property type="entry name" value="HOMOSERINE KINASE"/>
    <property type="match status" value="1"/>
</dbReference>
<dbReference type="PANTHER" id="PTHR20861">
    <property type="entry name" value="HOMOSERINE/4-DIPHOSPHOCYTIDYL-2-C-METHYL-D-ERYTHRITOL KINASE"/>
    <property type="match status" value="1"/>
</dbReference>
<dbReference type="Pfam" id="PF08544">
    <property type="entry name" value="GHMP_kinases_C"/>
    <property type="match status" value="1"/>
</dbReference>
<dbReference type="Pfam" id="PF00288">
    <property type="entry name" value="GHMP_kinases_N"/>
    <property type="match status" value="1"/>
</dbReference>
<dbReference type="PIRSF" id="PIRSF000676">
    <property type="entry name" value="Homoser_kin"/>
    <property type="match status" value="1"/>
</dbReference>
<dbReference type="PRINTS" id="PR00958">
    <property type="entry name" value="HOMSERKINASE"/>
</dbReference>
<dbReference type="SUPFAM" id="SSF55060">
    <property type="entry name" value="GHMP Kinase, C-terminal domain"/>
    <property type="match status" value="1"/>
</dbReference>
<dbReference type="SUPFAM" id="SSF54211">
    <property type="entry name" value="Ribosomal protein S5 domain 2-like"/>
    <property type="match status" value="1"/>
</dbReference>
<dbReference type="PROSITE" id="PS00627">
    <property type="entry name" value="GHMP_KINASES_ATP"/>
    <property type="match status" value="1"/>
</dbReference>
<feature type="chain" id="PRO_1000134268" description="Homoserine kinase">
    <location>
        <begin position="1"/>
        <end position="305"/>
    </location>
</feature>
<feature type="binding site" evidence="1">
    <location>
        <begin position="93"/>
        <end position="103"/>
    </location>
    <ligand>
        <name>ATP</name>
        <dbReference type="ChEBI" id="CHEBI:30616"/>
    </ligand>
</feature>
<proteinExistence type="inferred from homology"/>
<sequence length="305" mass="32297">MTSIHVQVPATTANIGAGFDCLGAALSLHNQFQFRLAGESEPFFSLELVGADVETQKLEATADNLLYRAFAKVFATLGQPVPHVNIAIDLKVPLSRGLGSSATAIVGGLVGANALAGSPLSQREIMNLAIEMEGHPDNVVPALLGGCQLSVKHQQDWVICPWVWHENVVPVVAIPDFELSTEEARAVLPQQYARAQAIFNASRLGLLPHGLAQNNPEYLTAALDDQIHQPYRKNLIKGYDPVQQAAIAAGAYGMVISGAGPTLLALAAPENAPKVATAMQTAWEGIGVKAIAHVLEIDQQGTVIL</sequence>
<protein>
    <recommendedName>
        <fullName evidence="1">Homoserine kinase</fullName>
        <shortName evidence="1">HK</shortName>
        <shortName evidence="1">HSK</shortName>
        <ecNumber evidence="1">2.7.1.39</ecNumber>
    </recommendedName>
</protein>
<reference key="1">
    <citation type="submission" date="2008-02" db="EMBL/GenBank/DDBJ databases">
        <title>Complete sequence of Synechococcus sp. PCC 7002.</title>
        <authorList>
            <person name="Li T."/>
            <person name="Zhao J."/>
            <person name="Zhao C."/>
            <person name="Liu Z."/>
            <person name="Zhao F."/>
            <person name="Marquardt J."/>
            <person name="Nomura C.T."/>
            <person name="Persson S."/>
            <person name="Detter J.C."/>
            <person name="Richardson P.M."/>
            <person name="Lanz C."/>
            <person name="Schuster S.C."/>
            <person name="Wang J."/>
            <person name="Li S."/>
            <person name="Huang X."/>
            <person name="Cai T."/>
            <person name="Yu Z."/>
            <person name="Luo J."/>
            <person name="Zhao J."/>
            <person name="Bryant D.A."/>
        </authorList>
    </citation>
    <scope>NUCLEOTIDE SEQUENCE [LARGE SCALE GENOMIC DNA]</scope>
    <source>
        <strain>ATCC 27264 / PCC 7002 / PR-6</strain>
    </source>
</reference>